<protein>
    <recommendedName>
        <fullName>Chondroitin proteoglycan 9</fullName>
    </recommendedName>
</protein>
<keyword id="KW-0325">Glycoprotein</keyword>
<keyword id="KW-0654">Proteoglycan</keyword>
<keyword id="KW-1185">Reference proteome</keyword>
<keyword id="KW-0732">Signal</keyword>
<organism>
    <name type="scientific">Caenorhabditis briggsae</name>
    <dbReference type="NCBI Taxonomy" id="6238"/>
    <lineage>
        <taxon>Eukaryota</taxon>
        <taxon>Metazoa</taxon>
        <taxon>Ecdysozoa</taxon>
        <taxon>Nematoda</taxon>
        <taxon>Chromadorea</taxon>
        <taxon>Rhabditida</taxon>
        <taxon>Rhabditina</taxon>
        <taxon>Rhabditomorpha</taxon>
        <taxon>Rhabditoidea</taxon>
        <taxon>Rhabditidae</taxon>
        <taxon>Peloderinae</taxon>
        <taxon>Caenorhabditis</taxon>
    </lineage>
</organism>
<dbReference type="EMBL" id="HE601244">
    <property type="protein sequence ID" value="CAP24270.1"/>
    <property type="molecule type" value="Genomic_DNA"/>
</dbReference>
<dbReference type="SMR" id="A8WUV8"/>
<dbReference type="FunCoup" id="A8WUV8">
    <property type="interactions" value="1396"/>
</dbReference>
<dbReference type="STRING" id="6238.A8WUV8"/>
<dbReference type="GlyCosmos" id="A8WUV8">
    <property type="glycosylation" value="2 sites, No reported glycans"/>
</dbReference>
<dbReference type="EnsemblMetazoa" id="CBG03365.1">
    <property type="protein sequence ID" value="CBG03365.1"/>
    <property type="gene ID" value="WBGene00026239"/>
</dbReference>
<dbReference type="KEGG" id="cbr:CBG_03365"/>
<dbReference type="CTD" id="8575682"/>
<dbReference type="WormBase" id="CBG03365">
    <property type="protein sequence ID" value="CBP06502"/>
    <property type="gene ID" value="WBGene00026239"/>
    <property type="gene designation" value="Cbr-cpg-9"/>
</dbReference>
<dbReference type="eggNOG" id="ENOG502RAJP">
    <property type="taxonomic scope" value="Eukaryota"/>
</dbReference>
<dbReference type="HOGENOM" id="CLU_2742361_0_0_1"/>
<dbReference type="InParanoid" id="A8WUV8"/>
<dbReference type="OMA" id="MNFWHLL"/>
<dbReference type="Proteomes" id="UP000008549">
    <property type="component" value="Unassembled WGS sequence"/>
</dbReference>
<sequence length="70" mass="7524">MNFWHLLLLAVLFFVTVFGADLEGSGSGDVVEDASEQAILKAQNLLNSVPSEESGAEVEASGEDVQTFFF</sequence>
<reference evidence="3 4" key="1">
    <citation type="journal article" date="2003" name="PLoS Biol.">
        <title>The genome sequence of Caenorhabditis briggsae: a platform for comparative genomics.</title>
        <authorList>
            <person name="Stein L.D."/>
            <person name="Bao Z."/>
            <person name="Blasiar D."/>
            <person name="Blumenthal T."/>
            <person name="Brent M.R."/>
            <person name="Chen N."/>
            <person name="Chinwalla A."/>
            <person name="Clarke L."/>
            <person name="Clee C."/>
            <person name="Coghlan A."/>
            <person name="Coulson A."/>
            <person name="D'Eustachio P."/>
            <person name="Fitch D.H.A."/>
            <person name="Fulton L.A."/>
            <person name="Fulton R.E."/>
            <person name="Griffiths-Jones S."/>
            <person name="Harris T.W."/>
            <person name="Hillier L.W."/>
            <person name="Kamath R."/>
            <person name="Kuwabara P.E."/>
            <person name="Mardis E.R."/>
            <person name="Marra M.A."/>
            <person name="Miner T.L."/>
            <person name="Minx P."/>
            <person name="Mullikin J.C."/>
            <person name="Plumb R.W."/>
            <person name="Rogers J."/>
            <person name="Schein J.E."/>
            <person name="Sohrmann M."/>
            <person name="Spieth J."/>
            <person name="Stajich J.E."/>
            <person name="Wei C."/>
            <person name="Willey D."/>
            <person name="Wilson R.K."/>
            <person name="Durbin R.M."/>
            <person name="Waterston R.H."/>
        </authorList>
    </citation>
    <scope>NUCLEOTIDE SEQUENCE [LARGE SCALE GENOMIC DNA]</scope>
    <source>
        <strain evidence="4">AF16</strain>
    </source>
</reference>
<evidence type="ECO:0000250" key="1">
    <source>
        <dbReference type="UniProtKB" id="Q95XP7"/>
    </source>
</evidence>
<evidence type="ECO:0000255" key="2"/>
<evidence type="ECO:0000305" key="3"/>
<evidence type="ECO:0000312" key="4">
    <source>
        <dbReference type="EMBL" id="CAP24270.1"/>
    </source>
</evidence>
<feature type="signal peptide" evidence="2">
    <location>
        <begin position="1"/>
        <end position="19"/>
    </location>
</feature>
<feature type="chain" id="PRO_0000320229" description="Chondroitin proteoglycan 9">
    <location>
        <begin position="20"/>
        <end position="70"/>
    </location>
</feature>
<feature type="glycosylation site" description="O-linked (Xyl...) (chondroitin sulfate) serine" evidence="1">
    <location>
        <position position="25"/>
    </location>
</feature>
<feature type="glycosylation site" description="O-linked (Xyl...) (chondroitin sulfate) serine" evidence="1">
    <location>
        <position position="27"/>
    </location>
</feature>
<accession>A8WUV8</accession>
<name>CPG9_CAEBR</name>
<gene>
    <name type="primary">cpg-9</name>
    <name type="ORF">CBG03365</name>
</gene>
<proteinExistence type="inferred from homology"/>